<dbReference type="EMBL" id="CR380956">
    <property type="protein sequence ID" value="CAG61093.1"/>
    <property type="molecule type" value="Genomic_DNA"/>
</dbReference>
<dbReference type="RefSeq" id="XP_448142.1">
    <property type="nucleotide sequence ID" value="XM_448142.1"/>
</dbReference>
<dbReference type="FunCoup" id="Q6FNQ2">
    <property type="interactions" value="74"/>
</dbReference>
<dbReference type="STRING" id="284593.Q6FNQ2"/>
<dbReference type="GlyCosmos" id="Q6FNQ2">
    <property type="glycosylation" value="2 sites, No reported glycans"/>
</dbReference>
<dbReference type="EnsemblFungi" id="CAGL0J09944g-T">
    <property type="protein sequence ID" value="CAGL0J09944g-T-p1"/>
    <property type="gene ID" value="CAGL0J09944g"/>
</dbReference>
<dbReference type="GeneID" id="2889427"/>
<dbReference type="KEGG" id="cgr:2889427"/>
<dbReference type="CGD" id="CAL0133042">
    <property type="gene designation" value="AQR1"/>
</dbReference>
<dbReference type="VEuPathDB" id="FungiDB:CAGL0J09944g"/>
<dbReference type="eggNOG" id="KOG0255">
    <property type="taxonomic scope" value="Eukaryota"/>
</dbReference>
<dbReference type="HOGENOM" id="CLU_008455_8_4_1"/>
<dbReference type="InParanoid" id="Q6FNQ2"/>
<dbReference type="OMA" id="MCGFWSS"/>
<dbReference type="Proteomes" id="UP000002428">
    <property type="component" value="Chromosome J"/>
</dbReference>
<dbReference type="GO" id="GO:0031410">
    <property type="term" value="C:cytoplasmic vesicle"/>
    <property type="evidence" value="ECO:0000314"/>
    <property type="project" value="CGD"/>
</dbReference>
<dbReference type="GO" id="GO:0005886">
    <property type="term" value="C:plasma membrane"/>
    <property type="evidence" value="ECO:0000314"/>
    <property type="project" value="CGD"/>
</dbReference>
<dbReference type="GO" id="GO:0008028">
    <property type="term" value="F:monocarboxylic acid transmembrane transporter activity"/>
    <property type="evidence" value="ECO:0007669"/>
    <property type="project" value="EnsemblFungi"/>
</dbReference>
<dbReference type="GO" id="GO:0015565">
    <property type="term" value="F:threonine efflux transmembrane transporter activity"/>
    <property type="evidence" value="ECO:0007669"/>
    <property type="project" value="EnsemblFungi"/>
</dbReference>
<dbReference type="GO" id="GO:0042910">
    <property type="term" value="F:xenobiotic transmembrane transporter activity"/>
    <property type="evidence" value="ECO:0007669"/>
    <property type="project" value="EnsemblFungi"/>
</dbReference>
<dbReference type="GO" id="GO:0032973">
    <property type="term" value="P:amino acid export across plasma membrane"/>
    <property type="evidence" value="ECO:0007669"/>
    <property type="project" value="EnsemblFungi"/>
</dbReference>
<dbReference type="GO" id="GO:0071311">
    <property type="term" value="P:cellular response to acetate"/>
    <property type="evidence" value="ECO:0000315"/>
    <property type="project" value="CGD"/>
</dbReference>
<dbReference type="GO" id="GO:1990961">
    <property type="term" value="P:xenobiotic detoxification by transmembrane export across the plasma membrane"/>
    <property type="evidence" value="ECO:0000315"/>
    <property type="project" value="CGD"/>
</dbReference>
<dbReference type="CDD" id="cd17323">
    <property type="entry name" value="MFS_Tpo1_MDR_like"/>
    <property type="match status" value="1"/>
</dbReference>
<dbReference type="Gene3D" id="1.20.1250.20">
    <property type="entry name" value="MFS general substrate transporter like domains"/>
    <property type="match status" value="1"/>
</dbReference>
<dbReference type="InterPro" id="IPR011701">
    <property type="entry name" value="MFS"/>
</dbReference>
<dbReference type="InterPro" id="IPR020846">
    <property type="entry name" value="MFS_dom"/>
</dbReference>
<dbReference type="InterPro" id="IPR036259">
    <property type="entry name" value="MFS_trans_sf"/>
</dbReference>
<dbReference type="InterPro" id="IPR005829">
    <property type="entry name" value="Sugar_transporter_CS"/>
</dbReference>
<dbReference type="PANTHER" id="PTHR23502">
    <property type="entry name" value="MAJOR FACILITATOR SUPERFAMILY"/>
    <property type="match status" value="1"/>
</dbReference>
<dbReference type="PANTHER" id="PTHR23502:SF51">
    <property type="entry name" value="QUINIDINE RESISTANCE PROTEIN 1-RELATED"/>
    <property type="match status" value="1"/>
</dbReference>
<dbReference type="Pfam" id="PF07690">
    <property type="entry name" value="MFS_1"/>
    <property type="match status" value="1"/>
</dbReference>
<dbReference type="SUPFAM" id="SSF103473">
    <property type="entry name" value="MFS general substrate transporter"/>
    <property type="match status" value="1"/>
</dbReference>
<dbReference type="PROSITE" id="PS50850">
    <property type="entry name" value="MFS"/>
    <property type="match status" value="1"/>
</dbReference>
<dbReference type="PROSITE" id="PS00216">
    <property type="entry name" value="SUGAR_TRANSPORT_1"/>
    <property type="match status" value="1"/>
</dbReference>
<sequence>MVESGPHSINDDLSTNEYIEQPKFYHDDHASDSNSLSDIDDDNKKHGGLYGTVSRTTTRELPEDLESEISSTHSQDAKEDLEIQHNAAPYSLLNYRDKWCMVALLTACGFWSSLGSPIYYPALKQLEKQFDIDENMVNITVVVYLLFQGLAPTCSGGLADKFGRRPVLLIGMLIYVVASIGLACAPSYGVIVFLRCVQSIGISPSIAISSGVVGDFTVKSERGTFVGATSGFVLLGQAFGSLIGAALAAAWDWRAIFWFLTIGCGASFAICFALLPETKRSIVGNLSIRPKNPLNIAPVTLLPAARRKLKYDNPDYETLDKTKPVFDLTSAFKICALPEIFLSLLPPGLAFAMWTLMLSAISSELSAAPYNYKLTIIGVCYLPAGIGGLIGSFATGKIIDFQYKKKLKVFEEKKAAGIIPEDEKFNIMGARLQSVLPQNFLCVVTYILFGWSCDKGWKIPSILITSCVSSFCAMSTLSAMSTLLVDLYPGKSSTASSCFNFMRCSLSAILMGCFAKMKHSLTVGGTFTLLAGLVFVGNFLMFIPMKHGMRWREEREQRAALKAKSMDQANENGYKLFSKIKFSSPFKSEEKV</sequence>
<feature type="chain" id="PRO_0000443409" description="Multidrug transporter AQR1">
    <location>
        <begin position="1"/>
        <end position="592"/>
    </location>
</feature>
<feature type="transmembrane region" description="Helical" evidence="1">
    <location>
        <begin position="99"/>
        <end position="119"/>
    </location>
</feature>
<feature type="transmembrane region" description="Helical" evidence="1">
    <location>
        <begin position="139"/>
        <end position="159"/>
    </location>
</feature>
<feature type="transmembrane region" description="Helical" evidence="1">
    <location>
        <begin position="166"/>
        <end position="186"/>
    </location>
</feature>
<feature type="transmembrane region" description="Helical" evidence="1">
    <location>
        <begin position="188"/>
        <end position="208"/>
    </location>
</feature>
<feature type="transmembrane region" description="Helical" evidence="1">
    <location>
        <begin position="231"/>
        <end position="251"/>
    </location>
</feature>
<feature type="transmembrane region" description="Helical" evidence="1">
    <location>
        <begin position="255"/>
        <end position="275"/>
    </location>
</feature>
<feature type="transmembrane region" description="Helical" evidence="1">
    <location>
        <begin position="340"/>
        <end position="360"/>
    </location>
</feature>
<feature type="transmembrane region" description="Helical" evidence="1">
    <location>
        <begin position="374"/>
        <end position="394"/>
    </location>
</feature>
<feature type="transmembrane region" description="Helical" evidence="1">
    <location>
        <begin position="432"/>
        <end position="452"/>
    </location>
</feature>
<feature type="transmembrane region" description="Helical" evidence="1">
    <location>
        <begin position="459"/>
        <end position="479"/>
    </location>
</feature>
<feature type="transmembrane region" description="Helical" evidence="1">
    <location>
        <begin position="497"/>
        <end position="517"/>
    </location>
</feature>
<feature type="transmembrane region" description="Helical" evidence="1">
    <location>
        <begin position="523"/>
        <end position="543"/>
    </location>
</feature>
<feature type="region of interest" description="Disordered" evidence="3">
    <location>
        <begin position="1"/>
        <end position="77"/>
    </location>
</feature>
<feature type="glycosylation site" description="N-linked (GlcNAc...) asparagine" evidence="2">
    <location>
        <position position="138"/>
    </location>
</feature>
<feature type="glycosylation site" description="N-linked (GlcNAc...) asparagine" evidence="2">
    <location>
        <position position="285"/>
    </location>
</feature>
<reference key="1">
    <citation type="journal article" date="2004" name="Nature">
        <title>Genome evolution in yeasts.</title>
        <authorList>
            <person name="Dujon B."/>
            <person name="Sherman D."/>
            <person name="Fischer G."/>
            <person name="Durrens P."/>
            <person name="Casaregola S."/>
            <person name="Lafontaine I."/>
            <person name="de Montigny J."/>
            <person name="Marck C."/>
            <person name="Neuveglise C."/>
            <person name="Talla E."/>
            <person name="Goffard N."/>
            <person name="Frangeul L."/>
            <person name="Aigle M."/>
            <person name="Anthouard V."/>
            <person name="Babour A."/>
            <person name="Barbe V."/>
            <person name="Barnay S."/>
            <person name="Blanchin S."/>
            <person name="Beckerich J.-M."/>
            <person name="Beyne E."/>
            <person name="Bleykasten C."/>
            <person name="Boisrame A."/>
            <person name="Boyer J."/>
            <person name="Cattolico L."/>
            <person name="Confanioleri F."/>
            <person name="de Daruvar A."/>
            <person name="Despons L."/>
            <person name="Fabre E."/>
            <person name="Fairhead C."/>
            <person name="Ferry-Dumazet H."/>
            <person name="Groppi A."/>
            <person name="Hantraye F."/>
            <person name="Hennequin C."/>
            <person name="Jauniaux N."/>
            <person name="Joyet P."/>
            <person name="Kachouri R."/>
            <person name="Kerrest A."/>
            <person name="Koszul R."/>
            <person name="Lemaire M."/>
            <person name="Lesur I."/>
            <person name="Ma L."/>
            <person name="Muller H."/>
            <person name="Nicaud J.-M."/>
            <person name="Nikolski M."/>
            <person name="Oztas S."/>
            <person name="Ozier-Kalogeropoulos O."/>
            <person name="Pellenz S."/>
            <person name="Potier S."/>
            <person name="Richard G.-F."/>
            <person name="Straub M.-L."/>
            <person name="Suleau A."/>
            <person name="Swennen D."/>
            <person name="Tekaia F."/>
            <person name="Wesolowski-Louvel M."/>
            <person name="Westhof E."/>
            <person name="Wirth B."/>
            <person name="Zeniou-Meyer M."/>
            <person name="Zivanovic Y."/>
            <person name="Bolotin-Fukuhara M."/>
            <person name="Thierry A."/>
            <person name="Bouchier C."/>
            <person name="Caudron B."/>
            <person name="Scarpelli C."/>
            <person name="Gaillardin C."/>
            <person name="Weissenbach J."/>
            <person name="Wincker P."/>
            <person name="Souciet J.-L."/>
        </authorList>
    </citation>
    <scope>NUCLEOTIDE SEQUENCE [LARGE SCALE GENOMIC DNA]</scope>
    <source>
        <strain>ATCC 2001 / BCRC 20586 / JCM 3761 / NBRC 0622 / NRRL Y-65 / CBS 138</strain>
    </source>
</reference>
<reference key="2">
    <citation type="journal article" date="2013" name="Front. Microbiol.">
        <title>The dual role of candida glabrata drug:H+ antiporter CgAqr1 (ORF CAGL0J09944g) in antifungal drug and acetic acid resistance.</title>
        <authorList>
            <person name="Costa C."/>
            <person name="Henriques A."/>
            <person name="Pires C."/>
            <person name="Nunes J."/>
            <person name="Ohno M."/>
            <person name="Chibana H."/>
            <person name="Sa-Correia I."/>
            <person name="Teixeira M.C."/>
        </authorList>
    </citation>
    <scope>DISRUPTION PHENOTYPE</scope>
    <scope>FUNCTION</scope>
    <scope>SUBCELLULAR LOCATION</scope>
</reference>
<reference key="3">
    <citation type="journal article" date="2016" name="Front. Microbiol.">
        <title>Clotrimazole drug resistance in Candida glabrata clinical isolates correlates with increased expression of the drug:H(+) antiporters CgAqr1, CgTpo1_1, CgTpo3, and CgQdr2.</title>
        <authorList>
            <person name="Costa C."/>
            <person name="Ribeiro J."/>
            <person name="Miranda I.M."/>
            <person name="Silva-Dias A."/>
            <person name="Cavalheiro M."/>
            <person name="Costa-de-Oliveira S."/>
            <person name="Rodrigues A.G."/>
            <person name="Teixeira M.C."/>
        </authorList>
    </citation>
    <scope>FUNCTION</scope>
</reference>
<evidence type="ECO:0000255" key="1"/>
<evidence type="ECO:0000255" key="2">
    <source>
        <dbReference type="PROSITE-ProRule" id="PRU00498"/>
    </source>
</evidence>
<evidence type="ECO:0000256" key="3">
    <source>
        <dbReference type="SAM" id="MobiDB-lite"/>
    </source>
</evidence>
<evidence type="ECO:0000269" key="4">
    <source>
    </source>
</evidence>
<evidence type="ECO:0000269" key="5">
    <source>
    </source>
</evidence>
<evidence type="ECO:0000303" key="6">
    <source>
    </source>
</evidence>
<evidence type="ECO:0000303" key="7">
    <source>
    </source>
</evidence>
<evidence type="ECO:0000305" key="8"/>
<organism>
    <name type="scientific">Candida glabrata (strain ATCC 2001 / BCRC 20586 / JCM 3761 / NBRC 0622 / NRRL Y-65 / CBS 138)</name>
    <name type="common">Yeast</name>
    <name type="synonym">Nakaseomyces glabratus</name>
    <dbReference type="NCBI Taxonomy" id="284593"/>
    <lineage>
        <taxon>Eukaryota</taxon>
        <taxon>Fungi</taxon>
        <taxon>Dikarya</taxon>
        <taxon>Ascomycota</taxon>
        <taxon>Saccharomycotina</taxon>
        <taxon>Saccharomycetes</taxon>
        <taxon>Saccharomycetales</taxon>
        <taxon>Saccharomycetaceae</taxon>
        <taxon>Nakaseomyces</taxon>
    </lineage>
</organism>
<proteinExistence type="inferred from homology"/>
<keyword id="KW-1003">Cell membrane</keyword>
<keyword id="KW-0325">Glycoprotein</keyword>
<keyword id="KW-0472">Membrane</keyword>
<keyword id="KW-1185">Reference proteome</keyword>
<keyword id="KW-0812">Transmembrane</keyword>
<keyword id="KW-1133">Transmembrane helix</keyword>
<keyword id="KW-0813">Transport</keyword>
<name>AQR1_CANGA</name>
<accession>Q6FNQ2</accession>
<gene>
    <name evidence="6" type="primary">AQR1</name>
    <name type="ordered locus">CAGL0J09944g</name>
</gene>
<protein>
    <recommendedName>
        <fullName evidence="6">Multidrug transporter AQR1</fullName>
    </recommendedName>
    <alternativeName>
        <fullName evidence="7">Drug:H(+) antiporter AQR1</fullName>
        <shortName evidence="7">DHA AQR1</shortName>
    </alternativeName>
    <alternativeName>
        <fullName evidence="6">Flucytosine exporter AQR1</fullName>
    </alternativeName>
</protein>
<comment type="function">
    <text evidence="4 5">Multidrug transporter acts as a determinant of resistance to acetic acid, flucytosine and clotrimazole, these 3 compounds acting synergistically against the pathogen (PubMed:23805133, PubMed:27148215). Reduces the intracellular accumulation of the antifungal agents flucytosine and, to a moderate extent, of clotrimazole (PubMed:23805133). Its role in acetic acid resistance may be indirect, presumably through the transport of a still unidentified physiological substrate (PubMed:23805133).</text>
</comment>
<comment type="subcellular location">
    <subcellularLocation>
        <location evidence="4">Cell membrane</location>
        <topology evidence="1">Multi-pass membrane protein</topology>
    </subcellularLocation>
    <text evidence="4">Also localizes to membrane vesicles (PubMed:23805133).</text>
</comment>
<comment type="disruption phenotype">
    <text evidence="4">Leads to intracellular accumulation of flucytosine and clotrimazole (PubMed:23805133).</text>
</comment>
<comment type="similarity">
    <text evidence="8">Belongs to the major facilitator superfamily. CAR1 family.</text>
</comment>